<dbReference type="EC" id="6.1.1.11" evidence="1"/>
<dbReference type="EMBL" id="AF222894">
    <property type="protein sequence ID" value="AAF30512.1"/>
    <property type="molecule type" value="Genomic_DNA"/>
</dbReference>
<dbReference type="RefSeq" id="WP_006688660.1">
    <property type="nucleotide sequence ID" value="NC_002162.1"/>
</dbReference>
<dbReference type="SMR" id="Q9PR38"/>
<dbReference type="STRING" id="273119.UU106"/>
<dbReference type="EnsemblBacteria" id="AAF30512">
    <property type="protein sequence ID" value="AAF30512"/>
    <property type="gene ID" value="UU106"/>
</dbReference>
<dbReference type="GeneID" id="29672764"/>
<dbReference type="KEGG" id="uur:UU106"/>
<dbReference type="eggNOG" id="COG0172">
    <property type="taxonomic scope" value="Bacteria"/>
</dbReference>
<dbReference type="HOGENOM" id="CLU_023797_1_1_14"/>
<dbReference type="OrthoDB" id="9804647at2"/>
<dbReference type="UniPathway" id="UPA00906">
    <property type="reaction ID" value="UER00895"/>
</dbReference>
<dbReference type="Proteomes" id="UP000000423">
    <property type="component" value="Chromosome"/>
</dbReference>
<dbReference type="GO" id="GO:0005737">
    <property type="term" value="C:cytoplasm"/>
    <property type="evidence" value="ECO:0007669"/>
    <property type="project" value="UniProtKB-SubCell"/>
</dbReference>
<dbReference type="GO" id="GO:0005524">
    <property type="term" value="F:ATP binding"/>
    <property type="evidence" value="ECO:0007669"/>
    <property type="project" value="UniProtKB-UniRule"/>
</dbReference>
<dbReference type="GO" id="GO:0004828">
    <property type="term" value="F:serine-tRNA ligase activity"/>
    <property type="evidence" value="ECO:0007669"/>
    <property type="project" value="UniProtKB-UniRule"/>
</dbReference>
<dbReference type="GO" id="GO:0016260">
    <property type="term" value="P:selenocysteine biosynthetic process"/>
    <property type="evidence" value="ECO:0007669"/>
    <property type="project" value="UniProtKB-UniRule"/>
</dbReference>
<dbReference type="GO" id="GO:0006434">
    <property type="term" value="P:seryl-tRNA aminoacylation"/>
    <property type="evidence" value="ECO:0007669"/>
    <property type="project" value="UniProtKB-UniRule"/>
</dbReference>
<dbReference type="CDD" id="cd00770">
    <property type="entry name" value="SerRS_core"/>
    <property type="match status" value="1"/>
</dbReference>
<dbReference type="Gene3D" id="3.30.930.10">
    <property type="entry name" value="Bira Bifunctional Protein, Domain 2"/>
    <property type="match status" value="1"/>
</dbReference>
<dbReference type="Gene3D" id="1.10.287.40">
    <property type="entry name" value="Serine-tRNA synthetase, tRNA binding domain"/>
    <property type="match status" value="1"/>
</dbReference>
<dbReference type="HAMAP" id="MF_00176">
    <property type="entry name" value="Ser_tRNA_synth_type1"/>
    <property type="match status" value="1"/>
</dbReference>
<dbReference type="InterPro" id="IPR002314">
    <property type="entry name" value="aa-tRNA-synt_IIb"/>
</dbReference>
<dbReference type="InterPro" id="IPR006195">
    <property type="entry name" value="aa-tRNA-synth_II"/>
</dbReference>
<dbReference type="InterPro" id="IPR045864">
    <property type="entry name" value="aa-tRNA-synth_II/BPL/LPL"/>
</dbReference>
<dbReference type="InterPro" id="IPR002317">
    <property type="entry name" value="Ser-tRNA-ligase_type_1"/>
</dbReference>
<dbReference type="InterPro" id="IPR015866">
    <property type="entry name" value="Ser-tRNA-synth_1_N"/>
</dbReference>
<dbReference type="InterPro" id="IPR042103">
    <property type="entry name" value="SerRS_1_N_sf"/>
</dbReference>
<dbReference type="InterPro" id="IPR033729">
    <property type="entry name" value="SerRS_core"/>
</dbReference>
<dbReference type="InterPro" id="IPR010978">
    <property type="entry name" value="tRNA-bd_arm"/>
</dbReference>
<dbReference type="NCBIfam" id="TIGR00414">
    <property type="entry name" value="serS"/>
    <property type="match status" value="1"/>
</dbReference>
<dbReference type="PANTHER" id="PTHR43697:SF1">
    <property type="entry name" value="SERINE--TRNA LIGASE"/>
    <property type="match status" value="1"/>
</dbReference>
<dbReference type="PANTHER" id="PTHR43697">
    <property type="entry name" value="SERYL-TRNA SYNTHETASE"/>
    <property type="match status" value="1"/>
</dbReference>
<dbReference type="Pfam" id="PF02403">
    <property type="entry name" value="Seryl_tRNA_N"/>
    <property type="match status" value="1"/>
</dbReference>
<dbReference type="Pfam" id="PF00587">
    <property type="entry name" value="tRNA-synt_2b"/>
    <property type="match status" value="1"/>
</dbReference>
<dbReference type="PIRSF" id="PIRSF001529">
    <property type="entry name" value="Ser-tRNA-synth_IIa"/>
    <property type="match status" value="1"/>
</dbReference>
<dbReference type="PRINTS" id="PR00981">
    <property type="entry name" value="TRNASYNTHSER"/>
</dbReference>
<dbReference type="SUPFAM" id="SSF55681">
    <property type="entry name" value="Class II aaRS and biotin synthetases"/>
    <property type="match status" value="1"/>
</dbReference>
<dbReference type="SUPFAM" id="SSF46589">
    <property type="entry name" value="tRNA-binding arm"/>
    <property type="match status" value="1"/>
</dbReference>
<dbReference type="PROSITE" id="PS50862">
    <property type="entry name" value="AA_TRNA_LIGASE_II"/>
    <property type="match status" value="1"/>
</dbReference>
<sequence>MFDINLIRKDIATTKEKMLNKKVPSNLFDQIFDLDVLVRSLMQQEQNLNAKKNQLSKEIGILAKNKDPKLQQTLDLVNNIKNELQDISLTLSNKQDELNKLLLVIPNMPDDSVPIGNDENDNVEIKKVFKPKKFDFLPLAHWDLAVKNKLIDFDKSTKITGSRFIIYTNFGARLYRALQQFCLDMNVKAGFSEIWAPVIVNQESLIGSGNLPKFADDLFKLENSNYYLSPTAEVQLTNLHRNEILKASDLPLYYTALTPCFRSEAGSAGRDVRGVIRQHQFHKVELVKLCKPEDSFKELESMTRQAESILEALELPYRRIVLCTGDLGFSSAKTYDLEVWLPSYNAYKEISSCSNCTNFQARRAKIRYKETIDATTELVHTLNGSSLAIDRLWAAIVENYQQEDGSINIPKVLKKYIY</sequence>
<comment type="function">
    <text evidence="1">Catalyzes the attachment of serine to tRNA(Ser). Is also able to aminoacylate tRNA(Sec) with serine, to form the misacylated tRNA L-seryl-tRNA(Sec), which will be further converted into selenocysteinyl-tRNA(Sec).</text>
</comment>
<comment type="catalytic activity">
    <reaction evidence="1">
        <text>tRNA(Ser) + L-serine + ATP = L-seryl-tRNA(Ser) + AMP + diphosphate + H(+)</text>
        <dbReference type="Rhea" id="RHEA:12292"/>
        <dbReference type="Rhea" id="RHEA-COMP:9669"/>
        <dbReference type="Rhea" id="RHEA-COMP:9703"/>
        <dbReference type="ChEBI" id="CHEBI:15378"/>
        <dbReference type="ChEBI" id="CHEBI:30616"/>
        <dbReference type="ChEBI" id="CHEBI:33019"/>
        <dbReference type="ChEBI" id="CHEBI:33384"/>
        <dbReference type="ChEBI" id="CHEBI:78442"/>
        <dbReference type="ChEBI" id="CHEBI:78533"/>
        <dbReference type="ChEBI" id="CHEBI:456215"/>
        <dbReference type="EC" id="6.1.1.11"/>
    </reaction>
</comment>
<comment type="catalytic activity">
    <reaction evidence="1">
        <text>tRNA(Sec) + L-serine + ATP = L-seryl-tRNA(Sec) + AMP + diphosphate + H(+)</text>
        <dbReference type="Rhea" id="RHEA:42580"/>
        <dbReference type="Rhea" id="RHEA-COMP:9742"/>
        <dbReference type="Rhea" id="RHEA-COMP:10128"/>
        <dbReference type="ChEBI" id="CHEBI:15378"/>
        <dbReference type="ChEBI" id="CHEBI:30616"/>
        <dbReference type="ChEBI" id="CHEBI:33019"/>
        <dbReference type="ChEBI" id="CHEBI:33384"/>
        <dbReference type="ChEBI" id="CHEBI:78442"/>
        <dbReference type="ChEBI" id="CHEBI:78533"/>
        <dbReference type="ChEBI" id="CHEBI:456215"/>
        <dbReference type="EC" id="6.1.1.11"/>
    </reaction>
</comment>
<comment type="pathway">
    <text evidence="1">Aminoacyl-tRNA biosynthesis; selenocysteinyl-tRNA(Sec) biosynthesis; L-seryl-tRNA(Sec) from L-serine and tRNA(Sec): step 1/1.</text>
</comment>
<comment type="subunit">
    <text evidence="1">Homodimer. The tRNA molecule binds across the dimer.</text>
</comment>
<comment type="subcellular location">
    <subcellularLocation>
        <location evidence="1">Cytoplasm</location>
    </subcellularLocation>
</comment>
<comment type="domain">
    <text evidence="1">Consists of two distinct domains, a catalytic core and a N-terminal extension that is involved in tRNA binding.</text>
</comment>
<comment type="similarity">
    <text evidence="1">Belongs to the class-II aminoacyl-tRNA synthetase family. Type-1 seryl-tRNA synthetase subfamily.</text>
</comment>
<organism>
    <name type="scientific">Ureaplasma parvum serovar 3 (strain ATCC 700970)</name>
    <dbReference type="NCBI Taxonomy" id="273119"/>
    <lineage>
        <taxon>Bacteria</taxon>
        <taxon>Bacillati</taxon>
        <taxon>Mycoplasmatota</taxon>
        <taxon>Mycoplasmoidales</taxon>
        <taxon>Mycoplasmoidaceae</taxon>
        <taxon>Ureaplasma</taxon>
    </lineage>
</organism>
<keyword id="KW-0030">Aminoacyl-tRNA synthetase</keyword>
<keyword id="KW-0067">ATP-binding</keyword>
<keyword id="KW-0963">Cytoplasm</keyword>
<keyword id="KW-0436">Ligase</keyword>
<keyword id="KW-0547">Nucleotide-binding</keyword>
<keyword id="KW-0648">Protein biosynthesis</keyword>
<keyword id="KW-1185">Reference proteome</keyword>
<protein>
    <recommendedName>
        <fullName evidence="1">Serine--tRNA ligase</fullName>
        <ecNumber evidence="1">6.1.1.11</ecNumber>
    </recommendedName>
    <alternativeName>
        <fullName evidence="1">Seryl-tRNA synthetase</fullName>
        <shortName evidence="1">SerRS</shortName>
    </alternativeName>
    <alternativeName>
        <fullName evidence="1">Seryl-tRNA(Ser/Sec) synthetase</fullName>
    </alternativeName>
</protein>
<evidence type="ECO:0000255" key="1">
    <source>
        <dbReference type="HAMAP-Rule" id="MF_00176"/>
    </source>
</evidence>
<reference key="1">
    <citation type="journal article" date="2000" name="Nature">
        <title>The complete sequence of the mucosal pathogen Ureaplasma urealyticum.</title>
        <authorList>
            <person name="Glass J.I."/>
            <person name="Lefkowitz E.J."/>
            <person name="Glass J.S."/>
            <person name="Heiner C.R."/>
            <person name="Chen E.Y."/>
            <person name="Cassell G.H."/>
        </authorList>
    </citation>
    <scope>NUCLEOTIDE SEQUENCE [LARGE SCALE GENOMIC DNA]</scope>
    <source>
        <strain>ATCC 700970</strain>
    </source>
</reference>
<name>SYS_UREPA</name>
<proteinExistence type="inferred from homology"/>
<feature type="chain" id="PRO_0000122152" description="Serine--tRNA ligase">
    <location>
        <begin position="1"/>
        <end position="418"/>
    </location>
</feature>
<feature type="binding site" evidence="1">
    <location>
        <begin position="231"/>
        <end position="233"/>
    </location>
    <ligand>
        <name>L-serine</name>
        <dbReference type="ChEBI" id="CHEBI:33384"/>
    </ligand>
</feature>
<feature type="binding site" evidence="1">
    <location>
        <begin position="262"/>
        <end position="264"/>
    </location>
    <ligand>
        <name>ATP</name>
        <dbReference type="ChEBI" id="CHEBI:30616"/>
    </ligand>
</feature>
<feature type="binding site" evidence="1">
    <location>
        <position position="285"/>
    </location>
    <ligand>
        <name>L-serine</name>
        <dbReference type="ChEBI" id="CHEBI:33384"/>
    </ligand>
</feature>
<feature type="binding site" evidence="1">
    <location>
        <begin position="349"/>
        <end position="352"/>
    </location>
    <ligand>
        <name>ATP</name>
        <dbReference type="ChEBI" id="CHEBI:30616"/>
    </ligand>
</feature>
<feature type="binding site" evidence="1">
    <location>
        <position position="385"/>
    </location>
    <ligand>
        <name>L-serine</name>
        <dbReference type="ChEBI" id="CHEBI:33384"/>
    </ligand>
</feature>
<accession>Q9PR38</accession>
<gene>
    <name evidence="1" type="primary">serS</name>
    <name type="ordered locus">UU106</name>
</gene>